<feature type="chain" id="PRO_0000140742" description="3-dehydroquinate synthase">
    <location>
        <begin position="1"/>
        <end position="362"/>
    </location>
</feature>
<feature type="binding site" evidence="1">
    <location>
        <begin position="71"/>
        <end position="76"/>
    </location>
    <ligand>
        <name>NAD(+)</name>
        <dbReference type="ChEBI" id="CHEBI:57540"/>
    </ligand>
</feature>
<feature type="binding site" evidence="1">
    <location>
        <begin position="105"/>
        <end position="109"/>
    </location>
    <ligand>
        <name>NAD(+)</name>
        <dbReference type="ChEBI" id="CHEBI:57540"/>
    </ligand>
</feature>
<feature type="binding site" evidence="1">
    <location>
        <begin position="129"/>
        <end position="130"/>
    </location>
    <ligand>
        <name>NAD(+)</name>
        <dbReference type="ChEBI" id="CHEBI:57540"/>
    </ligand>
</feature>
<feature type="binding site" evidence="1">
    <location>
        <position position="142"/>
    </location>
    <ligand>
        <name>NAD(+)</name>
        <dbReference type="ChEBI" id="CHEBI:57540"/>
    </ligand>
</feature>
<feature type="binding site" evidence="1">
    <location>
        <position position="151"/>
    </location>
    <ligand>
        <name>NAD(+)</name>
        <dbReference type="ChEBI" id="CHEBI:57540"/>
    </ligand>
</feature>
<feature type="binding site" evidence="1">
    <location>
        <position position="184"/>
    </location>
    <ligand>
        <name>Zn(2+)</name>
        <dbReference type="ChEBI" id="CHEBI:29105"/>
    </ligand>
</feature>
<feature type="binding site" evidence="1">
    <location>
        <position position="247"/>
    </location>
    <ligand>
        <name>Zn(2+)</name>
        <dbReference type="ChEBI" id="CHEBI:29105"/>
    </ligand>
</feature>
<feature type="binding site" evidence="1">
    <location>
        <position position="264"/>
    </location>
    <ligand>
        <name>Zn(2+)</name>
        <dbReference type="ChEBI" id="CHEBI:29105"/>
    </ligand>
</feature>
<evidence type="ECO:0000255" key="1">
    <source>
        <dbReference type="HAMAP-Rule" id="MF_00110"/>
    </source>
</evidence>
<gene>
    <name evidence="1" type="primary">aroB</name>
    <name type="ordered locus">HD_0422</name>
</gene>
<accession>Q7VNR5</accession>
<proteinExistence type="inferred from homology"/>
<keyword id="KW-0028">Amino-acid biosynthesis</keyword>
<keyword id="KW-0057">Aromatic amino acid biosynthesis</keyword>
<keyword id="KW-0170">Cobalt</keyword>
<keyword id="KW-0963">Cytoplasm</keyword>
<keyword id="KW-0456">Lyase</keyword>
<keyword id="KW-0479">Metal-binding</keyword>
<keyword id="KW-0520">NAD</keyword>
<keyword id="KW-0547">Nucleotide-binding</keyword>
<keyword id="KW-1185">Reference proteome</keyword>
<keyword id="KW-0862">Zinc</keyword>
<comment type="function">
    <text evidence="1">Catalyzes the conversion of 3-deoxy-D-arabino-heptulosonate 7-phosphate (DAHP) to dehydroquinate (DHQ).</text>
</comment>
<comment type="catalytic activity">
    <reaction evidence="1">
        <text>7-phospho-2-dehydro-3-deoxy-D-arabino-heptonate = 3-dehydroquinate + phosphate</text>
        <dbReference type="Rhea" id="RHEA:21968"/>
        <dbReference type="ChEBI" id="CHEBI:32364"/>
        <dbReference type="ChEBI" id="CHEBI:43474"/>
        <dbReference type="ChEBI" id="CHEBI:58394"/>
        <dbReference type="EC" id="4.2.3.4"/>
    </reaction>
</comment>
<comment type="cofactor">
    <cofactor evidence="1">
        <name>NAD(+)</name>
        <dbReference type="ChEBI" id="CHEBI:57540"/>
    </cofactor>
</comment>
<comment type="cofactor">
    <cofactor evidence="1">
        <name>Co(2+)</name>
        <dbReference type="ChEBI" id="CHEBI:48828"/>
    </cofactor>
    <cofactor evidence="1">
        <name>Zn(2+)</name>
        <dbReference type="ChEBI" id="CHEBI:29105"/>
    </cofactor>
    <text evidence="1">Binds 1 divalent metal cation per subunit. Can use either Co(2+) or Zn(2+).</text>
</comment>
<comment type="pathway">
    <text evidence="1">Metabolic intermediate biosynthesis; chorismate biosynthesis; chorismate from D-erythrose 4-phosphate and phosphoenolpyruvate: step 2/7.</text>
</comment>
<comment type="subcellular location">
    <subcellularLocation>
        <location evidence="1">Cytoplasm</location>
    </subcellularLocation>
</comment>
<comment type="similarity">
    <text evidence="1">Belongs to the sugar phosphate cyclases superfamily. Dehydroquinate synthase family.</text>
</comment>
<name>AROB_HAEDU</name>
<dbReference type="EC" id="4.2.3.4" evidence="1"/>
<dbReference type="EMBL" id="AE017143">
    <property type="protein sequence ID" value="AAP95387.1"/>
    <property type="molecule type" value="Genomic_DNA"/>
</dbReference>
<dbReference type="RefSeq" id="WP_010944440.1">
    <property type="nucleotide sequence ID" value="NC_002940.2"/>
</dbReference>
<dbReference type="SMR" id="Q7VNR5"/>
<dbReference type="STRING" id="233412.HD_0422"/>
<dbReference type="KEGG" id="hdu:HD_0422"/>
<dbReference type="eggNOG" id="COG0337">
    <property type="taxonomic scope" value="Bacteria"/>
</dbReference>
<dbReference type="HOGENOM" id="CLU_001201_0_2_6"/>
<dbReference type="OrthoDB" id="9806583at2"/>
<dbReference type="UniPathway" id="UPA00053">
    <property type="reaction ID" value="UER00085"/>
</dbReference>
<dbReference type="Proteomes" id="UP000001022">
    <property type="component" value="Chromosome"/>
</dbReference>
<dbReference type="GO" id="GO:0005737">
    <property type="term" value="C:cytoplasm"/>
    <property type="evidence" value="ECO:0007669"/>
    <property type="project" value="UniProtKB-SubCell"/>
</dbReference>
<dbReference type="GO" id="GO:0003856">
    <property type="term" value="F:3-dehydroquinate synthase activity"/>
    <property type="evidence" value="ECO:0007669"/>
    <property type="project" value="UniProtKB-UniRule"/>
</dbReference>
<dbReference type="GO" id="GO:0046872">
    <property type="term" value="F:metal ion binding"/>
    <property type="evidence" value="ECO:0007669"/>
    <property type="project" value="UniProtKB-KW"/>
</dbReference>
<dbReference type="GO" id="GO:0000166">
    <property type="term" value="F:nucleotide binding"/>
    <property type="evidence" value="ECO:0007669"/>
    <property type="project" value="UniProtKB-KW"/>
</dbReference>
<dbReference type="GO" id="GO:0008652">
    <property type="term" value="P:amino acid biosynthetic process"/>
    <property type="evidence" value="ECO:0007669"/>
    <property type="project" value="UniProtKB-KW"/>
</dbReference>
<dbReference type="GO" id="GO:0009073">
    <property type="term" value="P:aromatic amino acid family biosynthetic process"/>
    <property type="evidence" value="ECO:0007669"/>
    <property type="project" value="UniProtKB-KW"/>
</dbReference>
<dbReference type="GO" id="GO:0009423">
    <property type="term" value="P:chorismate biosynthetic process"/>
    <property type="evidence" value="ECO:0007669"/>
    <property type="project" value="UniProtKB-UniRule"/>
</dbReference>
<dbReference type="CDD" id="cd08195">
    <property type="entry name" value="DHQS"/>
    <property type="match status" value="1"/>
</dbReference>
<dbReference type="FunFam" id="3.40.50.1970:FF:000001">
    <property type="entry name" value="3-dehydroquinate synthase"/>
    <property type="match status" value="1"/>
</dbReference>
<dbReference type="Gene3D" id="3.40.50.1970">
    <property type="match status" value="1"/>
</dbReference>
<dbReference type="Gene3D" id="1.20.1090.10">
    <property type="entry name" value="Dehydroquinate synthase-like - alpha domain"/>
    <property type="match status" value="1"/>
</dbReference>
<dbReference type="HAMAP" id="MF_00110">
    <property type="entry name" value="DHQ_synthase"/>
    <property type="match status" value="1"/>
</dbReference>
<dbReference type="InterPro" id="IPR050071">
    <property type="entry name" value="Dehydroquinate_synthase"/>
</dbReference>
<dbReference type="InterPro" id="IPR016037">
    <property type="entry name" value="DHQ_synth_AroB"/>
</dbReference>
<dbReference type="InterPro" id="IPR030963">
    <property type="entry name" value="DHQ_synth_fam"/>
</dbReference>
<dbReference type="InterPro" id="IPR030960">
    <property type="entry name" value="DHQS/DOIS_N"/>
</dbReference>
<dbReference type="InterPro" id="IPR056179">
    <property type="entry name" value="DHQS_C"/>
</dbReference>
<dbReference type="NCBIfam" id="TIGR01357">
    <property type="entry name" value="aroB"/>
    <property type="match status" value="1"/>
</dbReference>
<dbReference type="PANTHER" id="PTHR43622">
    <property type="entry name" value="3-DEHYDROQUINATE SYNTHASE"/>
    <property type="match status" value="1"/>
</dbReference>
<dbReference type="PANTHER" id="PTHR43622:SF7">
    <property type="entry name" value="3-DEHYDROQUINATE SYNTHASE, CHLOROPLASTIC"/>
    <property type="match status" value="1"/>
</dbReference>
<dbReference type="Pfam" id="PF01761">
    <property type="entry name" value="DHQ_synthase"/>
    <property type="match status" value="1"/>
</dbReference>
<dbReference type="Pfam" id="PF24621">
    <property type="entry name" value="DHQS_C"/>
    <property type="match status" value="1"/>
</dbReference>
<dbReference type="PIRSF" id="PIRSF001455">
    <property type="entry name" value="DHQ_synth"/>
    <property type="match status" value="1"/>
</dbReference>
<dbReference type="SUPFAM" id="SSF56796">
    <property type="entry name" value="Dehydroquinate synthase-like"/>
    <property type="match status" value="1"/>
</dbReference>
<organism>
    <name type="scientific">Haemophilus ducreyi (strain 35000HP / ATCC 700724)</name>
    <dbReference type="NCBI Taxonomy" id="233412"/>
    <lineage>
        <taxon>Bacteria</taxon>
        <taxon>Pseudomonadati</taxon>
        <taxon>Pseudomonadota</taxon>
        <taxon>Gammaproteobacteria</taxon>
        <taxon>Pasteurellales</taxon>
        <taxon>Pasteurellaceae</taxon>
        <taxon>Haemophilus</taxon>
    </lineage>
</organism>
<protein>
    <recommendedName>
        <fullName evidence="1">3-dehydroquinate synthase</fullName>
        <shortName evidence="1">DHQS</shortName>
        <ecNumber evidence="1">4.2.3.4</ecNumber>
    </recommendedName>
</protein>
<reference key="1">
    <citation type="submission" date="2003-06" db="EMBL/GenBank/DDBJ databases">
        <title>The complete genome sequence of Haemophilus ducreyi.</title>
        <authorList>
            <person name="Munson R.S. Jr."/>
            <person name="Ray W.C."/>
            <person name="Mahairas G."/>
            <person name="Sabo P."/>
            <person name="Mungur R."/>
            <person name="Johnson L."/>
            <person name="Nguyen D."/>
            <person name="Wang J."/>
            <person name="Forst C."/>
            <person name="Hood L."/>
        </authorList>
    </citation>
    <scope>NUCLEOTIDE SEQUENCE [LARGE SCALE GENOMIC DNA]</scope>
    <source>
        <strain>35000HP / ATCC 700724</strain>
    </source>
</reference>
<sequence length="362" mass="39881">MLQVNVELKHHHYPIKIGQGLLTNPQSYAPLKAGDNVMIVSNPTIAQYYLATVRDTLITIGCKVDTVLLADGEQYKTFESLNQIFTALLENDHHRDTTLVALGGGVIGDVTGYAAASYQRGVRFIQIPTTLLAQIDSSIGGKTAINHPLGKNMIGAFYQPAAVIIDTQVLNTLAKRQVSAGLAEVIKYGVAFDSHFFEWLEQHIDQLMQLDPETLAHCIQRCCQLKAAIVAQDETEQGERALLNFGHTFGHSIEAHLGYGTWLHGESVAVGMLEAAELSKILGNLTEDQLARLEKLLANAVLPTTSPDGMTADQYLPYMWRDKKVLNGQLRLVLLKSFGQAYITTEATEQQILTAIQRFTQH</sequence>